<evidence type="ECO:0000255" key="1">
    <source>
        <dbReference type="HAMAP-Rule" id="MF_01212"/>
    </source>
</evidence>
<evidence type="ECO:0000255" key="2">
    <source>
        <dbReference type="PROSITE-ProRule" id="PRU01175"/>
    </source>
</evidence>
<name>DGTL1_CLOPS</name>
<proteinExistence type="inferred from homology"/>
<comment type="similarity">
    <text evidence="1">Belongs to the dGTPase family. Type 2 subfamily.</text>
</comment>
<accession>Q0SRH1</accession>
<organism>
    <name type="scientific">Clostridium perfringens (strain SM101 / Type A)</name>
    <dbReference type="NCBI Taxonomy" id="289380"/>
    <lineage>
        <taxon>Bacteria</taxon>
        <taxon>Bacillati</taxon>
        <taxon>Bacillota</taxon>
        <taxon>Clostridia</taxon>
        <taxon>Eubacteriales</taxon>
        <taxon>Clostridiaceae</taxon>
        <taxon>Clostridium</taxon>
    </lineage>
</organism>
<feature type="chain" id="PRO_1000138915" description="Deoxyguanosinetriphosphate triphosphohydrolase-like protein">
    <location>
        <begin position="1"/>
        <end position="342"/>
    </location>
</feature>
<feature type="domain" description="HD" evidence="2">
    <location>
        <begin position="75"/>
        <end position="190"/>
    </location>
</feature>
<protein>
    <recommendedName>
        <fullName evidence="1">Deoxyguanosinetriphosphate triphosphohydrolase-like protein</fullName>
    </recommendedName>
</protein>
<dbReference type="EMBL" id="CP000312">
    <property type="protein sequence ID" value="ABG86265.1"/>
    <property type="molecule type" value="Genomic_DNA"/>
</dbReference>
<dbReference type="RefSeq" id="WP_011592844.1">
    <property type="nucleotide sequence ID" value="NC_008262.1"/>
</dbReference>
<dbReference type="SMR" id="Q0SRH1"/>
<dbReference type="KEGG" id="cpr:CPR_1977"/>
<dbReference type="BioCyc" id="CPER289380:GI76-1988-MONOMER"/>
<dbReference type="Proteomes" id="UP000001824">
    <property type="component" value="Chromosome"/>
</dbReference>
<dbReference type="GO" id="GO:0016793">
    <property type="term" value="F:triphosphoric monoester hydrolase activity"/>
    <property type="evidence" value="ECO:0007669"/>
    <property type="project" value="InterPro"/>
</dbReference>
<dbReference type="CDD" id="cd00077">
    <property type="entry name" value="HDc"/>
    <property type="match status" value="1"/>
</dbReference>
<dbReference type="Gene3D" id="1.10.3210.10">
    <property type="entry name" value="Hypothetical protein af1432"/>
    <property type="match status" value="1"/>
</dbReference>
<dbReference type="HAMAP" id="MF_01212">
    <property type="entry name" value="dGTPase_type2"/>
    <property type="match status" value="1"/>
</dbReference>
<dbReference type="InterPro" id="IPR051094">
    <property type="entry name" value="Diverse_Catalytic_Enzymes"/>
</dbReference>
<dbReference type="InterPro" id="IPR023023">
    <property type="entry name" value="dNTPase_2"/>
</dbReference>
<dbReference type="InterPro" id="IPR003607">
    <property type="entry name" value="HD/PDEase_dom"/>
</dbReference>
<dbReference type="InterPro" id="IPR006674">
    <property type="entry name" value="HD_domain"/>
</dbReference>
<dbReference type="InterPro" id="IPR026875">
    <property type="entry name" value="PHydrolase_assoc_dom"/>
</dbReference>
<dbReference type="NCBIfam" id="NF002327">
    <property type="entry name" value="PRK01286.1-2"/>
    <property type="match status" value="1"/>
</dbReference>
<dbReference type="NCBIfam" id="NF002329">
    <property type="entry name" value="PRK01286.1-4"/>
    <property type="match status" value="1"/>
</dbReference>
<dbReference type="PANTHER" id="PTHR35795:SF1">
    <property type="entry name" value="BIS(5'-NUCLEOSYL)-TETRAPHOSPHATASE, SYMMETRICAL"/>
    <property type="match status" value="1"/>
</dbReference>
<dbReference type="PANTHER" id="PTHR35795">
    <property type="entry name" value="SLR1885 PROTEIN"/>
    <property type="match status" value="1"/>
</dbReference>
<dbReference type="Pfam" id="PF01966">
    <property type="entry name" value="HD"/>
    <property type="match status" value="1"/>
</dbReference>
<dbReference type="Pfam" id="PF13286">
    <property type="entry name" value="HD_assoc"/>
    <property type="match status" value="1"/>
</dbReference>
<dbReference type="SMART" id="SM00471">
    <property type="entry name" value="HDc"/>
    <property type="match status" value="1"/>
</dbReference>
<dbReference type="SUPFAM" id="SSF109604">
    <property type="entry name" value="HD-domain/PDEase-like"/>
    <property type="match status" value="1"/>
</dbReference>
<dbReference type="PROSITE" id="PS51831">
    <property type="entry name" value="HD"/>
    <property type="match status" value="1"/>
</dbReference>
<gene>
    <name type="ordered locus">CPR_1977</name>
</gene>
<reference key="1">
    <citation type="journal article" date="2006" name="Genome Res.">
        <title>Skewed genomic variability in strains of the toxigenic bacterial pathogen, Clostridium perfringens.</title>
        <authorList>
            <person name="Myers G.S.A."/>
            <person name="Rasko D.A."/>
            <person name="Cheung J.K."/>
            <person name="Ravel J."/>
            <person name="Seshadri R."/>
            <person name="DeBoy R.T."/>
            <person name="Ren Q."/>
            <person name="Varga J."/>
            <person name="Awad M.M."/>
            <person name="Brinkac L.M."/>
            <person name="Daugherty S.C."/>
            <person name="Haft D.H."/>
            <person name="Dodson R.J."/>
            <person name="Madupu R."/>
            <person name="Nelson W.C."/>
            <person name="Rosovitz M.J."/>
            <person name="Sullivan S.A."/>
            <person name="Khouri H."/>
            <person name="Dimitrov G.I."/>
            <person name="Watkins K.L."/>
            <person name="Mulligan S."/>
            <person name="Benton J."/>
            <person name="Radune D."/>
            <person name="Fisher D.J."/>
            <person name="Atkins H.S."/>
            <person name="Hiscox T."/>
            <person name="Jost B.H."/>
            <person name="Billington S.J."/>
            <person name="Songer J.G."/>
            <person name="McClane B.A."/>
            <person name="Titball R.W."/>
            <person name="Rood J.I."/>
            <person name="Melville S.B."/>
            <person name="Paulsen I.T."/>
        </authorList>
    </citation>
    <scope>NUCLEOTIDE SEQUENCE [LARGE SCALE GENOMIC DNA]</scope>
    <source>
        <strain>SM101 / Type A</strain>
    </source>
</reference>
<keyword id="KW-0378">Hydrolase</keyword>
<sequence length="342" mass="39397">MKIRENIENFERIKLNKVAKFSDESVGRERLEEPDEIRTCFMVDRDRIIHSKSFRRLKRKTQVFIRTYGDHYRTRLVHTLEVSQVARTIGVALSLNEYLIEAIALGHDLGHAAFAHIGEDVLNDFLPGGFKHNEQSVRVAKKIEKNGLGLNLTKEVLDGILNHSGFSNVSKVAGTFEGQVVRFADKIAYVNHDIDDSIRAGILKEEDLPKNIIEILGASGSERINTLVKDCVFNTIDNIDKGEPRVSLSKEIGDAFVQLRKFLFDNIYLGKYLEDERKKAEFILEKVIEYYYNNWGEMPELYRNICEEEGIHRGVTDYIAGMTDDYCTNEFNKIYIPKFVMY</sequence>